<name>OSMR_MOUSE</name>
<comment type="function">
    <text evidence="2 9">Associates with IL31RA to form the IL31 receptor (PubMed:9920829). Binds IL31 to activate STAT3 and possibly STAT1 and STAT5 (By similarity). Capable of transducing OSM-specific signaling events (By similarity).</text>
</comment>
<comment type="subunit">
    <text evidence="8 9">Heterodimer composed of OSMR and IL6ST (type II OSM receptor). Heterodimer with IL31RA to form the IL31 receptor.</text>
</comment>
<comment type="subcellular location">
    <subcellularLocation>
        <location evidence="11">Membrane</location>
        <topology evidence="11">Single-pass type I membrane protein</topology>
    </subcellularLocation>
</comment>
<comment type="alternative products">
    <event type="alternative splicing"/>
    <isoform>
        <id>O70458-1</id>
        <name>1</name>
        <sequence type="displayed"/>
    </isoform>
    <isoform>
        <id>O70458-2</id>
        <name>2</name>
        <sequence type="described" ref="VSP_021530"/>
    </isoform>
</comment>
<comment type="tissue specificity">
    <text evidence="7 8 9">Widely expressed (PubMed:9584176). Expressed at highest levels in the lung, heart, thymus and spleen (PubMed:9920829). Expressed in dorsal root ganglia (PubMed:25381841).</text>
</comment>
<comment type="induction">
    <text evidence="7">Up-regulated by IL31 in dorsal root ganglia.</text>
</comment>
<comment type="domain">
    <text evidence="1">The WSXWS motif appears to be necessary for proper protein folding and thereby efficient intracellular transport and cell-surface receptor binding.</text>
</comment>
<comment type="domain">
    <text evidence="1">The box 1 motif is required for JAK interaction and/or activation.</text>
</comment>
<comment type="similarity">
    <text evidence="11">Belongs to the type I cytokine receptor family. Type 2 subfamily.</text>
</comment>
<dbReference type="EMBL" id="AF058805">
    <property type="protein sequence ID" value="AAC40122.1"/>
    <property type="molecule type" value="mRNA"/>
</dbReference>
<dbReference type="EMBL" id="AB015978">
    <property type="protein sequence ID" value="BAA33725.1"/>
    <property type="molecule type" value="mRNA"/>
</dbReference>
<dbReference type="CCDS" id="CCDS27368.1">
    <molecule id="O70458-1"/>
</dbReference>
<dbReference type="CCDS" id="CCDS79358.1">
    <molecule id="O70458-2"/>
</dbReference>
<dbReference type="RefSeq" id="NP_001297398.1">
    <property type="nucleotide sequence ID" value="NM_001310469.1"/>
</dbReference>
<dbReference type="RefSeq" id="NP_035149.2">
    <property type="nucleotide sequence ID" value="NM_011019.3"/>
</dbReference>
<dbReference type="PDB" id="8V2B">
    <property type="method" value="EM"/>
    <property type="resolution" value="3.67 A"/>
    <property type="chains" value="C=24-738"/>
</dbReference>
<dbReference type="PDB" id="8V2C">
    <property type="method" value="EM"/>
    <property type="resolution" value="3.46 A"/>
    <property type="chains" value="C=24-738"/>
</dbReference>
<dbReference type="PDBsum" id="8V2B"/>
<dbReference type="PDBsum" id="8V2C"/>
<dbReference type="EMDB" id="EMD-42904"/>
<dbReference type="EMDB" id="EMD-42905"/>
<dbReference type="SMR" id="O70458"/>
<dbReference type="BioGRID" id="201984">
    <property type="interactions" value="2"/>
</dbReference>
<dbReference type="DIP" id="DIP-5787N"/>
<dbReference type="FunCoup" id="O70458">
    <property type="interactions" value="725"/>
</dbReference>
<dbReference type="IntAct" id="O70458">
    <property type="interactions" value="38"/>
</dbReference>
<dbReference type="MINT" id="O70458"/>
<dbReference type="STRING" id="10090.ENSMUSP00000022746"/>
<dbReference type="GlyCosmos" id="O70458">
    <property type="glycosylation" value="14 sites, No reported glycans"/>
</dbReference>
<dbReference type="GlyGen" id="O70458">
    <property type="glycosylation" value="15 sites, 7 N-linked glycans (7 sites)"/>
</dbReference>
<dbReference type="iPTMnet" id="O70458"/>
<dbReference type="PhosphoSitePlus" id="O70458"/>
<dbReference type="SwissPalm" id="O70458"/>
<dbReference type="PaxDb" id="10090-ENSMUSP00000022746"/>
<dbReference type="PeptideAtlas" id="O70458"/>
<dbReference type="ProteomicsDB" id="294122">
    <molecule id="O70458-1"/>
</dbReference>
<dbReference type="ProteomicsDB" id="294123">
    <molecule id="O70458-2"/>
</dbReference>
<dbReference type="Pumba" id="O70458"/>
<dbReference type="DNASU" id="18414"/>
<dbReference type="GeneID" id="18414"/>
<dbReference type="KEGG" id="mmu:18414"/>
<dbReference type="UCSC" id="uc011zrc.1">
    <molecule id="O70458-2"/>
    <property type="organism name" value="mouse"/>
</dbReference>
<dbReference type="AGR" id="MGI:1330819"/>
<dbReference type="CTD" id="9180"/>
<dbReference type="MGI" id="MGI:1330819">
    <property type="gene designation" value="Osmr"/>
</dbReference>
<dbReference type="eggNOG" id="ENOG502QWRV">
    <property type="taxonomic scope" value="Eukaryota"/>
</dbReference>
<dbReference type="InParanoid" id="O70458"/>
<dbReference type="OrthoDB" id="6382334at2759"/>
<dbReference type="PhylomeDB" id="O70458"/>
<dbReference type="Reactome" id="R-MMU-6788467">
    <property type="pathway name" value="IL-6-type cytokine receptor ligand interactions"/>
</dbReference>
<dbReference type="BioGRID-ORCS" id="18414">
    <property type="hits" value="4 hits in 80 CRISPR screens"/>
</dbReference>
<dbReference type="ChiTaRS" id="Osmr">
    <property type="organism name" value="mouse"/>
</dbReference>
<dbReference type="PRO" id="PR:O70458"/>
<dbReference type="Proteomes" id="UP000000589">
    <property type="component" value="Unplaced"/>
</dbReference>
<dbReference type="RNAct" id="O70458">
    <property type="molecule type" value="protein"/>
</dbReference>
<dbReference type="GO" id="GO:0009897">
    <property type="term" value="C:external side of plasma membrane"/>
    <property type="evidence" value="ECO:0000314"/>
    <property type="project" value="MGI"/>
</dbReference>
<dbReference type="GO" id="GO:0005886">
    <property type="term" value="C:plasma membrane"/>
    <property type="evidence" value="ECO:0000304"/>
    <property type="project" value="MGI"/>
</dbReference>
<dbReference type="GO" id="GO:0019955">
    <property type="term" value="F:cytokine binding"/>
    <property type="evidence" value="ECO:0000353"/>
    <property type="project" value="MGI"/>
</dbReference>
<dbReference type="GO" id="GO:0004924">
    <property type="term" value="F:oncostatin-M receptor activity"/>
    <property type="evidence" value="ECO:0000314"/>
    <property type="project" value="MGI"/>
</dbReference>
<dbReference type="GO" id="GO:0007166">
    <property type="term" value="P:cell surface receptor signaling pathway"/>
    <property type="evidence" value="ECO:0000304"/>
    <property type="project" value="MGI"/>
</dbReference>
<dbReference type="CDD" id="cd00063">
    <property type="entry name" value="FN3"/>
    <property type="match status" value="2"/>
</dbReference>
<dbReference type="FunFam" id="2.60.40.10:FF:000578">
    <property type="entry name" value="Leukemia inhibitory factor receptor"/>
    <property type="match status" value="1"/>
</dbReference>
<dbReference type="FunFam" id="2.60.40.10:FF:000607">
    <property type="entry name" value="Leukemia inhibitory factor receptor"/>
    <property type="match status" value="1"/>
</dbReference>
<dbReference type="FunFam" id="2.60.40.10:FF:000657">
    <property type="entry name" value="Leukemia inhibitory factor receptor"/>
    <property type="match status" value="1"/>
</dbReference>
<dbReference type="FunFam" id="2.60.40.10:FF:000738">
    <property type="entry name" value="Leukemia inhibitory factor receptor"/>
    <property type="match status" value="1"/>
</dbReference>
<dbReference type="FunFam" id="2.60.40.10:FF:001286">
    <property type="entry name" value="Oncostatin-M-specific receptor subunit beta"/>
    <property type="match status" value="1"/>
</dbReference>
<dbReference type="FunFam" id="2.60.40.10:FF:001289">
    <property type="entry name" value="Oncostatin-M-specific receptor subunit beta"/>
    <property type="match status" value="1"/>
</dbReference>
<dbReference type="FunFam" id="2.60.40.10:FF:001148">
    <property type="entry name" value="oncostatin-M-specific receptor subunit beta"/>
    <property type="match status" value="1"/>
</dbReference>
<dbReference type="Gene3D" id="2.60.40.10">
    <property type="entry name" value="Immunoglobulins"/>
    <property type="match status" value="7"/>
</dbReference>
<dbReference type="InterPro" id="IPR003961">
    <property type="entry name" value="FN3_dom"/>
</dbReference>
<dbReference type="InterPro" id="IPR036116">
    <property type="entry name" value="FN3_sf"/>
</dbReference>
<dbReference type="InterPro" id="IPR003529">
    <property type="entry name" value="Hematopoietin_rcpt_Gp130_CS"/>
</dbReference>
<dbReference type="InterPro" id="IPR013783">
    <property type="entry name" value="Ig-like_fold"/>
</dbReference>
<dbReference type="InterPro" id="IPR048497">
    <property type="entry name" value="LIF-R-like_Ig-like"/>
</dbReference>
<dbReference type="InterPro" id="IPR040817">
    <property type="entry name" value="LIFR_D2"/>
</dbReference>
<dbReference type="InterPro" id="IPR052672">
    <property type="entry name" value="Type1_Cytokine_Rcpt_Type2"/>
</dbReference>
<dbReference type="PANTHER" id="PTHR48423">
    <property type="entry name" value="INTERLEUKIN-27 RECEPTOR SUBUNIT ALPHA"/>
    <property type="match status" value="1"/>
</dbReference>
<dbReference type="PANTHER" id="PTHR48423:SF1">
    <property type="entry name" value="INTERLEUKIN-27 RECEPTOR SUBUNIT ALPHA"/>
    <property type="match status" value="1"/>
</dbReference>
<dbReference type="Pfam" id="PF00041">
    <property type="entry name" value="fn3"/>
    <property type="match status" value="1"/>
</dbReference>
<dbReference type="Pfam" id="PF21177">
    <property type="entry name" value="LIF-R_Ig-like"/>
    <property type="match status" value="1"/>
</dbReference>
<dbReference type="Pfam" id="PF17971">
    <property type="entry name" value="LIFR_D2"/>
    <property type="match status" value="1"/>
</dbReference>
<dbReference type="SMART" id="SM00060">
    <property type="entry name" value="FN3"/>
    <property type="match status" value="4"/>
</dbReference>
<dbReference type="SUPFAM" id="SSF49265">
    <property type="entry name" value="Fibronectin type III"/>
    <property type="match status" value="3"/>
</dbReference>
<dbReference type="PROSITE" id="PS50853">
    <property type="entry name" value="FN3"/>
    <property type="match status" value="4"/>
</dbReference>
<dbReference type="PROSITE" id="PS01353">
    <property type="entry name" value="HEMATOPO_REC_L_F2"/>
    <property type="match status" value="1"/>
</dbReference>
<accession>O70458</accession>
<accession>O88821</accession>
<organism>
    <name type="scientific">Mus musculus</name>
    <name type="common">Mouse</name>
    <dbReference type="NCBI Taxonomy" id="10090"/>
    <lineage>
        <taxon>Eukaryota</taxon>
        <taxon>Metazoa</taxon>
        <taxon>Chordata</taxon>
        <taxon>Craniata</taxon>
        <taxon>Vertebrata</taxon>
        <taxon>Euteleostomi</taxon>
        <taxon>Mammalia</taxon>
        <taxon>Eutheria</taxon>
        <taxon>Euarchontoglires</taxon>
        <taxon>Glires</taxon>
        <taxon>Rodentia</taxon>
        <taxon>Myomorpha</taxon>
        <taxon>Muroidea</taxon>
        <taxon>Muridae</taxon>
        <taxon>Murinae</taxon>
        <taxon>Mus</taxon>
        <taxon>Mus</taxon>
    </lineage>
</organism>
<keyword id="KW-0002">3D-structure</keyword>
<keyword id="KW-0025">Alternative splicing</keyword>
<keyword id="KW-1015">Disulfide bond</keyword>
<keyword id="KW-0325">Glycoprotein</keyword>
<keyword id="KW-0472">Membrane</keyword>
<keyword id="KW-0675">Receptor</keyword>
<keyword id="KW-1185">Reference proteome</keyword>
<keyword id="KW-0677">Repeat</keyword>
<keyword id="KW-0732">Signal</keyword>
<keyword id="KW-0812">Transmembrane</keyword>
<keyword id="KW-1133">Transmembrane helix</keyword>
<proteinExistence type="evidence at protein level"/>
<reference key="1">
    <citation type="journal article" date="1998" name="Mol. Cell. Biol.">
        <title>Cloning and characterization of a specific receptor for mouse oncostatin M.</title>
        <authorList>
            <person name="Lindberg R.A."/>
            <person name="Juan T.S.-C."/>
            <person name="Welcher A.A."/>
            <person name="Sun Y."/>
            <person name="Cupples R."/>
            <person name="Guthrie B."/>
            <person name="Fletcher F.A."/>
        </authorList>
    </citation>
    <scope>NUCLEOTIDE SEQUENCE [MRNA] (ISOFORM 1)</scope>
    <scope>SUBUNIT</scope>
    <scope>TISSUE SPECIFICITY</scope>
</reference>
<reference key="2">
    <citation type="journal article" date="1999" name="Blood">
        <title>Reconstitution of the functional mouse oncostatin M (OSM) receptor: molecular cloning of the OSM receptor beta subunit.</title>
        <authorList>
            <person name="Tanaka M."/>
            <person name="Hara T."/>
            <person name="Copeland N.G."/>
            <person name="Gilbert D.J."/>
            <person name="Jenkins N.A."/>
            <person name="Miyajima A."/>
        </authorList>
    </citation>
    <scope>NUCLEOTIDE SEQUENCE [MRNA] (ISOFORM 2)</scope>
    <scope>FUNCTION</scope>
    <scope>SUBUNIT</scope>
    <scope>TISSUE SPECIFICITY</scope>
</reference>
<reference key="3">
    <citation type="journal article" date="2009" name="Mol. Cell. Proteomics">
        <title>The mouse C2C12 myoblast cell surface N-linked glycoproteome: identification, glycosite occupancy, and membrane orientation.</title>
        <authorList>
            <person name="Gundry R.L."/>
            <person name="Raginski K."/>
            <person name="Tarasova Y."/>
            <person name="Tchernyshyov I."/>
            <person name="Bausch-Fluck D."/>
            <person name="Elliott S.T."/>
            <person name="Boheler K.R."/>
            <person name="Van Eyk J.E."/>
            <person name="Wollscheid B."/>
        </authorList>
    </citation>
    <scope>GLYCOSYLATION [LARGE SCALE ANALYSIS] AT ASN-577; ASN-689 AND ASN-722</scope>
    <source>
        <tissue>Myoblast</tissue>
    </source>
</reference>
<reference key="4">
    <citation type="journal article" date="2015" name="Exp. Dermatol.">
        <title>Repeated administration of IL-31 upregulates IL-31 receptor A (IL-31RA) in dorsal root ganglia and causes severe itch-associated scratching behaviour in mice.</title>
        <authorList>
            <person name="Arai I."/>
            <person name="Tsuji M."/>
            <person name="Miyagawa K."/>
            <person name="Takeda H."/>
            <person name="Akiyama N."/>
            <person name="Saito S."/>
        </authorList>
    </citation>
    <scope>TISSUE SPECIFICITY</scope>
    <scope>INDUCTION</scope>
</reference>
<gene>
    <name type="primary">Osmr</name>
    <name type="synonym">Osmrb</name>
</gene>
<sequence>MAFSVVLHPAFLLAVLSLRASRSEVLEEPLPLTPEIHKVSFQLKLQEVNLEWTVPALTHEELNMIFQIEISRLNISNTIWVENYSTTVKREEAVRWNWTSDIPLECVKHFIRIRALVDDTKSLPQSSWGNWSSWKEVNAKVSVEPDKSLIFPKDKVLEEGSNVTICLMYGQNVYNVSCKLQDEPIHGEQLDSHVSLLKLNNVVFLSDTGTNINCQATKGPKRIFGTVLFVSKVLEEPKNVSCETRDFKTLDCSWEPGVDTTLTWRKQRFQNYTLCESFSKRCEVSNYRNSYTWQITEGSQEMYNFTLTAENQLRKRSVNINFNLTHRVHPKAPQDVTLKIIGATKANMTWKVHSHGNNYTLLCQVKLQYGEVIHEHNVSVHMSANYLFSDLDPDTKYKAFVRCASANHFWKWSDWTQKEFSTPETAPSQALDVWRQVWSENGRRIVTLFWKPLLKSQANGKIISYNIVVENEAKPTESEHYCVWAPALSTNLSLDLQPYKIRITTNNSMGASPESLMVLSNDSGHEEVKEKTIKGIKDAFNISWEPVSGDTMGYVVDWCAHSQDQRCDLQWKNLGPNTTSTTITSDDFKPGVRYNFRIFERSVEHKARLVEKQRGYTQELAPLVNPKVEIPYSTPNSFVLRWPDYDSDFQAGFIKGYLVYVKSKEMQCNQPWERTLLPDNSVLCKYDINGSETKTLTVENLQPESLYEFFVTPYTSAGPGPNETFTKVTTPDARSHMLLQIILPMTLCVLLSIIVCYWKSQWVKEKCYPDIPNPYKSSILSLIKSKKNPHLIMNVKDCIPDVLEVINKAEGSKTQCVGSGKLHIEDVPTKPPIVPTEKDSSGPVPCIFFENFTYDQSAFDSGSHGLIPGPLKDTAHQLGLLAPPNKFQNVLKNDYMKPLVESPTEETSLIYVSQLASPMCGDKDTLATEPPVPVHGSEYKRQMVVPGSLASPSLKEDNSLTSTVLLGQGEQ</sequence>
<evidence type="ECO:0000250" key="1"/>
<evidence type="ECO:0000250" key="2">
    <source>
        <dbReference type="UniProtKB" id="Q99650"/>
    </source>
</evidence>
<evidence type="ECO:0000255" key="3"/>
<evidence type="ECO:0000255" key="4">
    <source>
        <dbReference type="PROSITE-ProRule" id="PRU00316"/>
    </source>
</evidence>
<evidence type="ECO:0000256" key="5">
    <source>
        <dbReference type="SAM" id="MobiDB-lite"/>
    </source>
</evidence>
<evidence type="ECO:0000269" key="6">
    <source>
    </source>
</evidence>
<evidence type="ECO:0000269" key="7">
    <source>
    </source>
</evidence>
<evidence type="ECO:0000269" key="8">
    <source>
    </source>
</evidence>
<evidence type="ECO:0000269" key="9">
    <source>
    </source>
</evidence>
<evidence type="ECO:0000303" key="10">
    <source>
    </source>
</evidence>
<evidence type="ECO:0000305" key="11"/>
<evidence type="ECO:0007829" key="12">
    <source>
        <dbReference type="PDB" id="8V2C"/>
    </source>
</evidence>
<feature type="signal peptide" evidence="3">
    <location>
        <begin position="1"/>
        <end position="23"/>
    </location>
</feature>
<feature type="chain" id="PRO_0000259760" description="Oncostatin-M-specific receptor subunit beta">
    <location>
        <begin position="24"/>
        <end position="971"/>
    </location>
</feature>
<feature type="topological domain" description="Extracellular" evidence="3">
    <location>
        <begin position="24"/>
        <end position="737"/>
    </location>
</feature>
<feature type="transmembrane region" description="Helical" evidence="3">
    <location>
        <begin position="738"/>
        <end position="758"/>
    </location>
</feature>
<feature type="topological domain" description="Cytoplasmic" evidence="3">
    <location>
        <begin position="759"/>
        <end position="971"/>
    </location>
</feature>
<feature type="domain" description="Fibronectin type-III 1" evidence="4">
    <location>
        <begin position="332"/>
        <end position="425"/>
    </location>
</feature>
<feature type="domain" description="Fibronectin type-III 2" evidence="4">
    <location>
        <begin position="427"/>
        <end position="523"/>
    </location>
</feature>
<feature type="domain" description="Fibronectin type-III 3" evidence="4">
    <location>
        <begin position="524"/>
        <end position="620"/>
    </location>
</feature>
<feature type="domain" description="Fibronectin type-III 4" evidence="4">
    <location>
        <begin position="622"/>
        <end position="733"/>
    </location>
</feature>
<feature type="region of interest" description="Disordered" evidence="5">
    <location>
        <begin position="949"/>
        <end position="971"/>
    </location>
</feature>
<feature type="short sequence motif" description="WSXWS motif" evidence="1">
    <location>
        <begin position="412"/>
        <end position="416"/>
    </location>
</feature>
<feature type="short sequence motif" description="Box 1 motif" evidence="1">
    <location>
        <begin position="767"/>
        <end position="775"/>
    </location>
</feature>
<feature type="compositionally biased region" description="Polar residues" evidence="5">
    <location>
        <begin position="959"/>
        <end position="971"/>
    </location>
</feature>
<feature type="glycosylation site" description="N-linked (GlcNAc...) asparagine" evidence="3">
    <location>
        <position position="74"/>
    </location>
</feature>
<feature type="glycosylation site" description="N-linked (GlcNAc...) asparagine" evidence="3">
    <location>
        <position position="97"/>
    </location>
</feature>
<feature type="glycosylation site" description="N-linked (GlcNAc...) asparagine" evidence="3">
    <location>
        <position position="130"/>
    </location>
</feature>
<feature type="glycosylation site" description="N-linked (GlcNAc...) asparagine" evidence="3">
    <location>
        <position position="162"/>
    </location>
</feature>
<feature type="glycosylation site" description="N-linked (GlcNAc...) asparagine" evidence="3">
    <location>
        <position position="239"/>
    </location>
</feature>
<feature type="glycosylation site" description="N-linked (GlcNAc...) asparagine" evidence="3">
    <location>
        <position position="271"/>
    </location>
</feature>
<feature type="glycosylation site" description="N-linked (GlcNAc...) asparagine" evidence="3">
    <location>
        <position position="304"/>
    </location>
</feature>
<feature type="glycosylation site" description="N-linked (GlcNAc...) asparagine" evidence="3">
    <location>
        <position position="323"/>
    </location>
</feature>
<feature type="glycosylation site" description="N-linked (GlcNAc...) asparagine" evidence="3">
    <location>
        <position position="377"/>
    </location>
</feature>
<feature type="glycosylation site" description="N-linked (GlcNAc...) asparagine" evidence="3">
    <location>
        <position position="491"/>
    </location>
</feature>
<feature type="glycosylation site" description="N-linked (GlcNAc...) asparagine" evidence="3">
    <location>
        <position position="541"/>
    </location>
</feature>
<feature type="glycosylation site" description="N-linked (GlcNAc...) asparagine" evidence="6">
    <location>
        <position position="577"/>
    </location>
</feature>
<feature type="glycosylation site" description="N-linked (GlcNAc...) asparagine" evidence="6">
    <location>
        <position position="689"/>
    </location>
</feature>
<feature type="glycosylation site" description="N-linked (GlcNAc...) asparagine" evidence="6">
    <location>
        <position position="722"/>
    </location>
</feature>
<feature type="disulfide bond" evidence="1">
    <location>
        <begin position="242"/>
        <end position="252"/>
    </location>
</feature>
<feature type="splice variant" id="VSP_021530" description="In isoform 2." evidence="10">
    <location>
        <position position="527"/>
    </location>
</feature>
<feature type="sequence conflict" description="In Ref. 2; BAA33725." evidence="11" ref="2">
    <original>T</original>
    <variation>A</variation>
    <location>
        <position position="505"/>
    </location>
</feature>
<feature type="strand" evidence="12">
    <location>
        <begin position="148"/>
        <end position="151"/>
    </location>
</feature>
<feature type="strand" evidence="12">
    <location>
        <begin position="154"/>
        <end position="158"/>
    </location>
</feature>
<feature type="strand" evidence="12">
    <location>
        <begin position="163"/>
        <end position="169"/>
    </location>
</feature>
<feature type="strand" evidence="12">
    <location>
        <begin position="175"/>
        <end position="179"/>
    </location>
</feature>
<feature type="strand" evidence="12">
    <location>
        <begin position="181"/>
        <end position="184"/>
    </location>
</feature>
<feature type="strand" evidence="12">
    <location>
        <begin position="190"/>
        <end position="199"/>
    </location>
</feature>
<feature type="strand" evidence="12">
    <location>
        <begin position="210"/>
        <end position="220"/>
    </location>
</feature>
<feature type="strand" evidence="12">
    <location>
        <begin position="223"/>
        <end position="231"/>
    </location>
</feature>
<feature type="strand" evidence="12">
    <location>
        <begin position="238"/>
        <end position="241"/>
    </location>
</feature>
<feature type="strand" evidence="12">
    <location>
        <begin position="244"/>
        <end position="255"/>
    </location>
</feature>
<feature type="strand" evidence="12">
    <location>
        <begin position="263"/>
        <end position="266"/>
    </location>
</feature>
<feature type="strand" evidence="12">
    <location>
        <begin position="271"/>
        <end position="274"/>
    </location>
</feature>
<feature type="turn" evidence="12">
    <location>
        <begin position="277"/>
        <end position="280"/>
    </location>
</feature>
<feature type="strand" evidence="12">
    <location>
        <begin position="286"/>
        <end position="294"/>
    </location>
</feature>
<feature type="strand" evidence="12">
    <location>
        <begin position="303"/>
        <end position="310"/>
    </location>
</feature>
<feature type="strand" evidence="12">
    <location>
        <begin position="315"/>
        <end position="322"/>
    </location>
</feature>
<protein>
    <recommendedName>
        <fullName>Oncostatin-M-specific receptor subunit beta</fullName>
    </recommendedName>
    <alternativeName>
        <fullName>Interleukin-31 receptor subunit beta</fullName>
        <shortName>IL-31 receptor subunit beta</shortName>
        <shortName>IL-31R subunit beta</shortName>
        <shortName>IL-31R-beta</shortName>
        <shortName>IL-31RB</shortName>
    </alternativeName>
</protein>